<sequence>MALWGGRFTQAADQRFKQFNDSLRFDYRLAEQDIVGSVAWSKALVTVGVLTADEQRQLEEALNVLLEEVRVNPQQILQSDAEDIHSWVEGKLIDKVGQLGKKLHTGRSRNDQVATDLKLWCKETVRELLTANRQLQSALVETAQANQDAVMPGYTHLQRAQPVTFAHWCLAYVEMLARDESRLQDTLKRLDVSPLGCGALAGTAYEIDREQLAGWLGFASATRNSLDSVSDRDHVLELLSDAAIGMVHLSRFAEDLIFFNSGEAGFVELSDRVTSGSSLMPQKKNPDALELIRGKCGRVQGALTGMMMTLKGLPLAYNKDMQEDKEGLFDALDTWLDCLHMAALVLDGIQVKRPRCQDAAQQGYANATELADYLVAKGVPFREAHHIVGEAVVEAIRQGKPLEALPLADLQKFSHVIGDDVYPMLSLQSCLDKRAAKGGVSPQQVAQAIDDARARLAL</sequence>
<feature type="chain" id="PRO_1000089110" description="Argininosuccinate lyase">
    <location>
        <begin position="1"/>
        <end position="458"/>
    </location>
</feature>
<evidence type="ECO:0000255" key="1">
    <source>
        <dbReference type="HAMAP-Rule" id="MF_00006"/>
    </source>
</evidence>
<proteinExistence type="inferred from homology"/>
<organism>
    <name type="scientific">Salmonella dublin (strain CT_02021853)</name>
    <dbReference type="NCBI Taxonomy" id="439851"/>
    <lineage>
        <taxon>Bacteria</taxon>
        <taxon>Pseudomonadati</taxon>
        <taxon>Pseudomonadota</taxon>
        <taxon>Gammaproteobacteria</taxon>
        <taxon>Enterobacterales</taxon>
        <taxon>Enterobacteriaceae</taxon>
        <taxon>Salmonella</taxon>
    </lineage>
</organism>
<dbReference type="EC" id="4.3.2.1" evidence="1"/>
<dbReference type="EMBL" id="CP001144">
    <property type="protein sequence ID" value="ACH75845.1"/>
    <property type="molecule type" value="Genomic_DNA"/>
</dbReference>
<dbReference type="RefSeq" id="WP_001230062.1">
    <property type="nucleotide sequence ID" value="NC_011205.1"/>
</dbReference>
<dbReference type="SMR" id="B5FPX5"/>
<dbReference type="KEGG" id="sed:SeD_A4528"/>
<dbReference type="HOGENOM" id="CLU_027272_2_3_6"/>
<dbReference type="UniPathway" id="UPA00068">
    <property type="reaction ID" value="UER00114"/>
</dbReference>
<dbReference type="Proteomes" id="UP000008322">
    <property type="component" value="Chromosome"/>
</dbReference>
<dbReference type="GO" id="GO:0005829">
    <property type="term" value="C:cytosol"/>
    <property type="evidence" value="ECO:0007669"/>
    <property type="project" value="TreeGrafter"/>
</dbReference>
<dbReference type="GO" id="GO:0004056">
    <property type="term" value="F:argininosuccinate lyase activity"/>
    <property type="evidence" value="ECO:0007669"/>
    <property type="project" value="UniProtKB-UniRule"/>
</dbReference>
<dbReference type="GO" id="GO:0042450">
    <property type="term" value="P:arginine biosynthetic process via ornithine"/>
    <property type="evidence" value="ECO:0007669"/>
    <property type="project" value="InterPro"/>
</dbReference>
<dbReference type="GO" id="GO:0006526">
    <property type="term" value="P:L-arginine biosynthetic process"/>
    <property type="evidence" value="ECO:0007669"/>
    <property type="project" value="UniProtKB-UniRule"/>
</dbReference>
<dbReference type="CDD" id="cd01359">
    <property type="entry name" value="Argininosuccinate_lyase"/>
    <property type="match status" value="1"/>
</dbReference>
<dbReference type="FunFam" id="1.10.275.10:FF:000004">
    <property type="entry name" value="Argininosuccinate lyase"/>
    <property type="match status" value="1"/>
</dbReference>
<dbReference type="FunFam" id="1.10.40.30:FF:000001">
    <property type="entry name" value="Argininosuccinate lyase"/>
    <property type="match status" value="1"/>
</dbReference>
<dbReference type="FunFam" id="1.20.200.10:FF:000006">
    <property type="entry name" value="Argininosuccinate lyase"/>
    <property type="match status" value="1"/>
</dbReference>
<dbReference type="Gene3D" id="1.10.40.30">
    <property type="entry name" value="Fumarase/aspartase (C-terminal domain)"/>
    <property type="match status" value="1"/>
</dbReference>
<dbReference type="Gene3D" id="1.20.200.10">
    <property type="entry name" value="Fumarase/aspartase (Central domain)"/>
    <property type="match status" value="1"/>
</dbReference>
<dbReference type="Gene3D" id="1.10.275.10">
    <property type="entry name" value="Fumarase/aspartase (N-terminal domain)"/>
    <property type="match status" value="1"/>
</dbReference>
<dbReference type="HAMAP" id="MF_00006">
    <property type="entry name" value="Arg_succ_lyase"/>
    <property type="match status" value="1"/>
</dbReference>
<dbReference type="InterPro" id="IPR029419">
    <property type="entry name" value="Arg_succ_lyase_C"/>
</dbReference>
<dbReference type="InterPro" id="IPR009049">
    <property type="entry name" value="Argininosuccinate_lyase"/>
</dbReference>
<dbReference type="InterPro" id="IPR024083">
    <property type="entry name" value="Fumarase/histidase_N"/>
</dbReference>
<dbReference type="InterPro" id="IPR020557">
    <property type="entry name" value="Fumarate_lyase_CS"/>
</dbReference>
<dbReference type="InterPro" id="IPR000362">
    <property type="entry name" value="Fumarate_lyase_fam"/>
</dbReference>
<dbReference type="InterPro" id="IPR022761">
    <property type="entry name" value="Fumarate_lyase_N"/>
</dbReference>
<dbReference type="InterPro" id="IPR008948">
    <property type="entry name" value="L-Aspartase-like"/>
</dbReference>
<dbReference type="NCBIfam" id="TIGR00838">
    <property type="entry name" value="argH"/>
    <property type="match status" value="1"/>
</dbReference>
<dbReference type="NCBIfam" id="NF008964">
    <property type="entry name" value="PRK12308.1"/>
    <property type="match status" value="1"/>
</dbReference>
<dbReference type="PANTHER" id="PTHR43814">
    <property type="entry name" value="ARGININOSUCCINATE LYASE"/>
    <property type="match status" value="1"/>
</dbReference>
<dbReference type="PANTHER" id="PTHR43814:SF1">
    <property type="entry name" value="ARGININOSUCCINATE LYASE"/>
    <property type="match status" value="1"/>
</dbReference>
<dbReference type="Pfam" id="PF14698">
    <property type="entry name" value="ASL_C2"/>
    <property type="match status" value="1"/>
</dbReference>
<dbReference type="Pfam" id="PF00206">
    <property type="entry name" value="Lyase_1"/>
    <property type="match status" value="1"/>
</dbReference>
<dbReference type="PRINTS" id="PR00145">
    <property type="entry name" value="ARGSUCLYASE"/>
</dbReference>
<dbReference type="PRINTS" id="PR00149">
    <property type="entry name" value="FUMRATELYASE"/>
</dbReference>
<dbReference type="SUPFAM" id="SSF48557">
    <property type="entry name" value="L-aspartase-like"/>
    <property type="match status" value="1"/>
</dbReference>
<dbReference type="PROSITE" id="PS00163">
    <property type="entry name" value="FUMARATE_LYASES"/>
    <property type="match status" value="1"/>
</dbReference>
<accession>B5FPX5</accession>
<gene>
    <name evidence="1" type="primary">argH</name>
    <name type="ordered locus">SeD_A4528</name>
</gene>
<reference key="1">
    <citation type="journal article" date="2011" name="J. Bacteriol.">
        <title>Comparative genomics of 28 Salmonella enterica isolates: evidence for CRISPR-mediated adaptive sublineage evolution.</title>
        <authorList>
            <person name="Fricke W.F."/>
            <person name="Mammel M.K."/>
            <person name="McDermott P.F."/>
            <person name="Tartera C."/>
            <person name="White D.G."/>
            <person name="Leclerc J.E."/>
            <person name="Ravel J."/>
            <person name="Cebula T.A."/>
        </authorList>
    </citation>
    <scope>NUCLEOTIDE SEQUENCE [LARGE SCALE GENOMIC DNA]</scope>
    <source>
        <strain>CT_02021853</strain>
    </source>
</reference>
<keyword id="KW-0028">Amino-acid biosynthesis</keyword>
<keyword id="KW-0055">Arginine biosynthesis</keyword>
<keyword id="KW-0963">Cytoplasm</keyword>
<keyword id="KW-0456">Lyase</keyword>
<comment type="catalytic activity">
    <reaction evidence="1">
        <text>2-(N(omega)-L-arginino)succinate = fumarate + L-arginine</text>
        <dbReference type="Rhea" id="RHEA:24020"/>
        <dbReference type="ChEBI" id="CHEBI:29806"/>
        <dbReference type="ChEBI" id="CHEBI:32682"/>
        <dbReference type="ChEBI" id="CHEBI:57472"/>
        <dbReference type="EC" id="4.3.2.1"/>
    </reaction>
</comment>
<comment type="pathway">
    <text evidence="1">Amino-acid biosynthesis; L-arginine biosynthesis; L-arginine from L-ornithine and carbamoyl phosphate: step 3/3.</text>
</comment>
<comment type="subcellular location">
    <subcellularLocation>
        <location evidence="1">Cytoplasm</location>
    </subcellularLocation>
</comment>
<comment type="similarity">
    <text evidence="1">Belongs to the lyase 1 family. Argininosuccinate lyase subfamily.</text>
</comment>
<protein>
    <recommendedName>
        <fullName evidence="1">Argininosuccinate lyase</fullName>
        <shortName evidence="1">ASAL</shortName>
        <ecNumber evidence="1">4.3.2.1</ecNumber>
    </recommendedName>
    <alternativeName>
        <fullName evidence="1">Arginosuccinase</fullName>
    </alternativeName>
</protein>
<name>ARLY_SALDC</name>